<proteinExistence type="inferred from homology"/>
<organism>
    <name type="scientific">Mycoplasmoides gallisepticum (strain R(low / passage 15 / clone 2))</name>
    <name type="common">Mycoplasma gallisepticum</name>
    <dbReference type="NCBI Taxonomy" id="710127"/>
    <lineage>
        <taxon>Bacteria</taxon>
        <taxon>Bacillati</taxon>
        <taxon>Mycoplasmatota</taxon>
        <taxon>Mycoplasmoidales</taxon>
        <taxon>Mycoplasmoidaceae</taxon>
        <taxon>Mycoplasmoides</taxon>
    </lineage>
</organism>
<dbReference type="EC" id="3.1.21.2" evidence="1"/>
<dbReference type="EMBL" id="AE015450">
    <property type="protein sequence ID" value="AAP56720.1"/>
    <property type="molecule type" value="Genomic_DNA"/>
</dbReference>
<dbReference type="RefSeq" id="WP_011113616.1">
    <property type="nucleotide sequence ID" value="NC_004829.2"/>
</dbReference>
<dbReference type="SMR" id="Q7NBA9"/>
<dbReference type="KEGG" id="mga:MGA_1293"/>
<dbReference type="PATRIC" id="fig|233150.7.peg.415"/>
<dbReference type="HOGENOM" id="CLU_025885_0_4_14"/>
<dbReference type="OrthoDB" id="9805666at2"/>
<dbReference type="Proteomes" id="UP000001418">
    <property type="component" value="Chromosome"/>
</dbReference>
<dbReference type="GO" id="GO:0008833">
    <property type="term" value="F:deoxyribonuclease IV (phage-T4-induced) activity"/>
    <property type="evidence" value="ECO:0007669"/>
    <property type="project" value="UniProtKB-UniRule"/>
</dbReference>
<dbReference type="GO" id="GO:0003677">
    <property type="term" value="F:DNA binding"/>
    <property type="evidence" value="ECO:0007669"/>
    <property type="project" value="InterPro"/>
</dbReference>
<dbReference type="GO" id="GO:0003906">
    <property type="term" value="F:DNA-(apurinic or apyrimidinic site) endonuclease activity"/>
    <property type="evidence" value="ECO:0007669"/>
    <property type="project" value="TreeGrafter"/>
</dbReference>
<dbReference type="GO" id="GO:0008081">
    <property type="term" value="F:phosphoric diester hydrolase activity"/>
    <property type="evidence" value="ECO:0007669"/>
    <property type="project" value="TreeGrafter"/>
</dbReference>
<dbReference type="GO" id="GO:0008270">
    <property type="term" value="F:zinc ion binding"/>
    <property type="evidence" value="ECO:0007669"/>
    <property type="project" value="UniProtKB-UniRule"/>
</dbReference>
<dbReference type="GO" id="GO:0006284">
    <property type="term" value="P:base-excision repair"/>
    <property type="evidence" value="ECO:0007669"/>
    <property type="project" value="TreeGrafter"/>
</dbReference>
<dbReference type="CDD" id="cd00019">
    <property type="entry name" value="AP2Ec"/>
    <property type="match status" value="1"/>
</dbReference>
<dbReference type="FunFam" id="3.20.20.150:FF:000001">
    <property type="entry name" value="Probable endonuclease 4"/>
    <property type="match status" value="1"/>
</dbReference>
<dbReference type="Gene3D" id="3.20.20.150">
    <property type="entry name" value="Divalent-metal-dependent TIM barrel enzymes"/>
    <property type="match status" value="1"/>
</dbReference>
<dbReference type="HAMAP" id="MF_00152">
    <property type="entry name" value="Nfo"/>
    <property type="match status" value="1"/>
</dbReference>
<dbReference type="InterPro" id="IPR001719">
    <property type="entry name" value="AP_endonuc_2"/>
</dbReference>
<dbReference type="InterPro" id="IPR018246">
    <property type="entry name" value="AP_endonuc_F2_Zn_BS"/>
</dbReference>
<dbReference type="InterPro" id="IPR036237">
    <property type="entry name" value="Xyl_isomerase-like_sf"/>
</dbReference>
<dbReference type="InterPro" id="IPR013022">
    <property type="entry name" value="Xyl_isomerase-like_TIM-brl"/>
</dbReference>
<dbReference type="NCBIfam" id="TIGR00587">
    <property type="entry name" value="nfo"/>
    <property type="match status" value="1"/>
</dbReference>
<dbReference type="PANTHER" id="PTHR21445:SF0">
    <property type="entry name" value="APURINIC-APYRIMIDINIC ENDONUCLEASE"/>
    <property type="match status" value="1"/>
</dbReference>
<dbReference type="PANTHER" id="PTHR21445">
    <property type="entry name" value="ENDONUCLEASE IV ENDODEOXYRIBONUCLEASE IV"/>
    <property type="match status" value="1"/>
</dbReference>
<dbReference type="Pfam" id="PF01261">
    <property type="entry name" value="AP_endonuc_2"/>
    <property type="match status" value="1"/>
</dbReference>
<dbReference type="SMART" id="SM00518">
    <property type="entry name" value="AP2Ec"/>
    <property type="match status" value="1"/>
</dbReference>
<dbReference type="SUPFAM" id="SSF51658">
    <property type="entry name" value="Xylose isomerase-like"/>
    <property type="match status" value="1"/>
</dbReference>
<dbReference type="PROSITE" id="PS00729">
    <property type="entry name" value="AP_NUCLEASE_F2_1"/>
    <property type="match status" value="1"/>
</dbReference>
<dbReference type="PROSITE" id="PS00730">
    <property type="entry name" value="AP_NUCLEASE_F2_2"/>
    <property type="match status" value="1"/>
</dbReference>
<dbReference type="PROSITE" id="PS00731">
    <property type="entry name" value="AP_NUCLEASE_F2_3"/>
    <property type="match status" value="1"/>
</dbReference>
<dbReference type="PROSITE" id="PS51432">
    <property type="entry name" value="AP_NUCLEASE_F2_4"/>
    <property type="match status" value="1"/>
</dbReference>
<reference key="1">
    <citation type="journal article" date="2003" name="Microbiology">
        <title>The complete genome sequence of the avian pathogen Mycoplasma gallisepticum strain R(low).</title>
        <authorList>
            <person name="Papazisi L."/>
            <person name="Gorton T.S."/>
            <person name="Kutish G."/>
            <person name="Markham P.F."/>
            <person name="Browning G.F."/>
            <person name="Nguyen D.K."/>
            <person name="Swartzell S."/>
            <person name="Madan A."/>
            <person name="Mahairas G."/>
            <person name="Geary S.J."/>
        </authorList>
    </citation>
    <scope>NUCLEOTIDE SEQUENCE [LARGE SCALE GENOMIC DNA]</scope>
    <source>
        <strain>R(low / passage 15 / clone 2)</strain>
    </source>
</reference>
<name>END4_MYCGA</name>
<feature type="chain" id="PRO_0000190851" description="Probable endonuclease 4">
    <location>
        <begin position="1"/>
        <end position="303"/>
    </location>
</feature>
<feature type="binding site" evidence="1">
    <location>
        <position position="78"/>
    </location>
    <ligand>
        <name>Zn(2+)</name>
        <dbReference type="ChEBI" id="CHEBI:29105"/>
        <label>1</label>
    </ligand>
</feature>
<feature type="binding site" evidence="1">
    <location>
        <position position="118"/>
    </location>
    <ligand>
        <name>Zn(2+)</name>
        <dbReference type="ChEBI" id="CHEBI:29105"/>
        <label>1</label>
    </ligand>
</feature>
<feature type="binding site" evidence="1">
    <location>
        <position position="154"/>
    </location>
    <ligand>
        <name>Zn(2+)</name>
        <dbReference type="ChEBI" id="CHEBI:29105"/>
        <label>1</label>
    </ligand>
</feature>
<feature type="binding site" evidence="1">
    <location>
        <position position="154"/>
    </location>
    <ligand>
        <name>Zn(2+)</name>
        <dbReference type="ChEBI" id="CHEBI:29105"/>
        <label>2</label>
    </ligand>
</feature>
<feature type="binding site" evidence="1">
    <location>
        <position position="188"/>
    </location>
    <ligand>
        <name>Zn(2+)</name>
        <dbReference type="ChEBI" id="CHEBI:29105"/>
        <label>2</label>
    </ligand>
</feature>
<feature type="binding site" evidence="1">
    <location>
        <position position="191"/>
    </location>
    <ligand>
        <name>Zn(2+)</name>
        <dbReference type="ChEBI" id="CHEBI:29105"/>
        <label>3</label>
    </ligand>
</feature>
<feature type="binding site" evidence="1">
    <location>
        <position position="222"/>
    </location>
    <ligand>
        <name>Zn(2+)</name>
        <dbReference type="ChEBI" id="CHEBI:29105"/>
        <label>2</label>
    </ligand>
</feature>
<feature type="binding site" evidence="1">
    <location>
        <position position="235"/>
    </location>
    <ligand>
        <name>Zn(2+)</name>
        <dbReference type="ChEBI" id="CHEBI:29105"/>
        <label>3</label>
    </ligand>
</feature>
<feature type="binding site" evidence="1">
    <location>
        <position position="237"/>
    </location>
    <ligand>
        <name>Zn(2+)</name>
        <dbReference type="ChEBI" id="CHEBI:29105"/>
        <label>3</label>
    </ligand>
</feature>
<feature type="binding site" evidence="1">
    <location>
        <position position="267"/>
    </location>
    <ligand>
        <name>Zn(2+)</name>
        <dbReference type="ChEBI" id="CHEBI:29105"/>
        <label>2</label>
    </ligand>
</feature>
<gene>
    <name evidence="1" type="primary">nfo</name>
    <name type="ordered locus">MYCGA3700</name>
    <name type="ORF">MGA_1293</name>
</gene>
<keyword id="KW-0227">DNA damage</keyword>
<keyword id="KW-0234">DNA repair</keyword>
<keyword id="KW-0255">Endonuclease</keyword>
<keyword id="KW-0378">Hydrolase</keyword>
<keyword id="KW-0479">Metal-binding</keyword>
<keyword id="KW-0540">Nuclease</keyword>
<keyword id="KW-1185">Reference proteome</keyword>
<keyword id="KW-0862">Zinc</keyword>
<comment type="function">
    <text evidence="1">Endonuclease IV plays a role in DNA repair. It cleaves phosphodiester bonds at apurinic or apyrimidinic (AP) sites, generating a 3'-hydroxyl group and a 5'-terminal sugar phosphate.</text>
</comment>
<comment type="catalytic activity">
    <reaction evidence="1">
        <text>Endonucleolytic cleavage to 5'-phosphooligonucleotide end-products.</text>
        <dbReference type="EC" id="3.1.21.2"/>
    </reaction>
</comment>
<comment type="cofactor">
    <cofactor evidence="1">
        <name>Zn(2+)</name>
        <dbReference type="ChEBI" id="CHEBI:29105"/>
    </cofactor>
    <text evidence="1">Binds 3 Zn(2+) ions.</text>
</comment>
<comment type="similarity">
    <text evidence="1">Belongs to the AP endonuclease 2 family.</text>
</comment>
<protein>
    <recommendedName>
        <fullName evidence="1">Probable endonuclease 4</fullName>
        <ecNumber evidence="1">3.1.21.2</ecNumber>
    </recommendedName>
    <alternativeName>
        <fullName evidence="1">Endodeoxyribonuclease IV</fullName>
    </alternativeName>
    <alternativeName>
        <fullName evidence="1">Endonuclease IV</fullName>
    </alternativeName>
</protein>
<accession>Q7NBA9</accession>
<sequence length="303" mass="34550">MKSNKIKYLGCFVGATKPDFMLGMVKTVVDYGATSFMFYSGPPQSFRRTPTAQFKLDLAKAYLAKHNLGDLGDNYVVHAPYLINLANGDSTKRERSFNFFLDELKRTNELGAKYFVLHPGSALNVKDKTQALDHLATELNRAISMTKDTIICLETMADKGQQICSKFEELRYVIDQISDKSRIGVCFDTCHVHDAGYDLAKTQELIDHFDQVIGLKYLYVIHLNDSKNPMGARKDRHANIGYGKIGFENLLNFIYHKEICNKIIILETPWIDDPIRGEVPLYKEEIEMIRNKKFVEGLVNEES</sequence>
<evidence type="ECO:0000255" key="1">
    <source>
        <dbReference type="HAMAP-Rule" id="MF_00152"/>
    </source>
</evidence>